<name>DCAF7_MOUSE</name>
<comment type="function">
    <text evidence="1">Involved in craniofacial development. Acts upstream of the EDN1 pathway and is required for formation of the upper jaw equivalent, the palatoquadrate. The activity required for EDN1 pathway function differs between the first and second arches. Associates with DIAPH1 and controls GLI1 transcriptional activity. Could be involved in skin development. May function as a substrate receptor for CUL4-DDB1 E3 ubiquitin-protein ligase complex (By similarity).</text>
</comment>
<comment type="pathway">
    <text>Protein modification; protein ubiquitination.</text>
</comment>
<comment type="subunit">
    <text evidence="1">Interacts with DYRK1A, DYRK1B and DIAPH1. Interacts with DDB1. Interacts with ZNF703 (By similarity).</text>
</comment>
<comment type="subcellular location">
    <subcellularLocation>
        <location evidence="3">Cytoplasm</location>
    </subcellularLocation>
    <subcellularLocation>
        <location evidence="1">Nucleus</location>
    </subcellularLocation>
    <text>Overexpression of DIAHP1 or active RHOA causes translocation from the nucleus to cytoplasm.</text>
</comment>
<comment type="developmental stage">
    <text evidence="2">Highly expressed in 10.5 dpc embryo limb buds, in an overlapping pattern with PTCH1 and GLI1.</text>
</comment>
<comment type="similarity">
    <text evidence="3">Belongs to the WD repeat DCAF7 family.</text>
</comment>
<organism>
    <name type="scientific">Mus musculus</name>
    <name type="common">Mouse</name>
    <dbReference type="NCBI Taxonomy" id="10090"/>
    <lineage>
        <taxon>Eukaryota</taxon>
        <taxon>Metazoa</taxon>
        <taxon>Chordata</taxon>
        <taxon>Craniata</taxon>
        <taxon>Vertebrata</taxon>
        <taxon>Euteleostomi</taxon>
        <taxon>Mammalia</taxon>
        <taxon>Eutheria</taxon>
        <taxon>Euarchontoglires</taxon>
        <taxon>Glires</taxon>
        <taxon>Rodentia</taxon>
        <taxon>Myomorpha</taxon>
        <taxon>Muroidea</taxon>
        <taxon>Muridae</taxon>
        <taxon>Murinae</taxon>
        <taxon>Mus</taxon>
        <taxon>Mus</taxon>
    </lineage>
</organism>
<evidence type="ECO:0000250" key="1"/>
<evidence type="ECO:0000269" key="2">
    <source>
    </source>
</evidence>
<evidence type="ECO:0000305" key="3"/>
<accession>P61963</accession>
<accession>O15491</accession>
<accession>Q3TMV9</accession>
<accession>Q9DAE4</accession>
<sequence length="342" mass="38926">MSLHGKRKEIYKYEAPWTVYAMNWSVRPDKRFRLALGSFVEEYNNKVQLVGLDEESSEFICRNTFDHPYPTTKLMWIPDTKGVYPDLLATSGDYLRVWRVGETETRLECLLNNNKNSDFCAPLTSFDWNEVDPYLLGTSSIDTTCTIWGLETGQVLGRVNLVSGHVKTQLIAHDKEVYDIAFSRAGGGRDMFASVGADGSVRMFDLRHLEHSTIIYEDPQHHPLLRLCWNKQDPNYLATMAMDGMEVVILDVRVPCTPVARLNNHRACVNGIAWAPHSSCHICTAADDHQALIWDIQQMPRAIEDPILAYTAEGEINNVQWASTQPDWIAICYNNCLEILRV</sequence>
<proteinExistence type="evidence at protein level"/>
<dbReference type="EMBL" id="AK005902">
    <property type="protein sequence ID" value="BAB24308.1"/>
    <property type="molecule type" value="mRNA"/>
</dbReference>
<dbReference type="EMBL" id="AK047435">
    <property type="protein sequence ID" value="BAC33058.1"/>
    <property type="molecule type" value="mRNA"/>
</dbReference>
<dbReference type="EMBL" id="AK165674">
    <property type="protein sequence ID" value="BAE38331.1"/>
    <property type="molecule type" value="mRNA"/>
</dbReference>
<dbReference type="EMBL" id="BC048722">
    <property type="protein sequence ID" value="AAH48722.1"/>
    <property type="molecule type" value="mRNA"/>
</dbReference>
<dbReference type="CCDS" id="CCDS25546.1"/>
<dbReference type="RefSeq" id="NP_082222.1">
    <property type="nucleotide sequence ID" value="NM_027946.3"/>
</dbReference>
<dbReference type="SMR" id="P61963"/>
<dbReference type="BioGRID" id="214962">
    <property type="interactions" value="30"/>
</dbReference>
<dbReference type="FunCoup" id="P61963">
    <property type="interactions" value="4284"/>
</dbReference>
<dbReference type="IntAct" id="P61963">
    <property type="interactions" value="3"/>
</dbReference>
<dbReference type="MINT" id="P61963"/>
<dbReference type="STRING" id="10090.ENSMUSP00000058168"/>
<dbReference type="GlyGen" id="P61963">
    <property type="glycosylation" value="2 sites, 1 N-linked glycan (1 site), 1 O-linked glycan (1 site)"/>
</dbReference>
<dbReference type="iPTMnet" id="P61963"/>
<dbReference type="PhosphoSitePlus" id="P61963"/>
<dbReference type="SwissPalm" id="P61963"/>
<dbReference type="REPRODUCTION-2DPAGE" id="P61963"/>
<dbReference type="PaxDb" id="10090-ENSMUSP00000058168"/>
<dbReference type="PeptideAtlas" id="P61963"/>
<dbReference type="ProteomicsDB" id="279883"/>
<dbReference type="Pumba" id="P61963"/>
<dbReference type="Antibodypedia" id="9425">
    <property type="antibodies" value="186 antibodies from 27 providers"/>
</dbReference>
<dbReference type="DNASU" id="71833"/>
<dbReference type="Ensembl" id="ENSMUST00000058438.9">
    <property type="protein sequence ID" value="ENSMUSP00000058168.9"/>
    <property type="gene ID" value="ENSMUSG00000049354.9"/>
</dbReference>
<dbReference type="GeneID" id="71833"/>
<dbReference type="KEGG" id="mmu:71833"/>
<dbReference type="UCSC" id="uc007lxy.1">
    <property type="organism name" value="mouse"/>
</dbReference>
<dbReference type="AGR" id="MGI:1919083"/>
<dbReference type="CTD" id="10238"/>
<dbReference type="MGI" id="MGI:1919083">
    <property type="gene designation" value="Dcaf7"/>
</dbReference>
<dbReference type="VEuPathDB" id="HostDB:ENSMUSG00000049354"/>
<dbReference type="eggNOG" id="KOG0290">
    <property type="taxonomic scope" value="Eukaryota"/>
</dbReference>
<dbReference type="GeneTree" id="ENSGT00390000006939"/>
<dbReference type="HOGENOM" id="CLU_013694_0_0_1"/>
<dbReference type="InParanoid" id="P61963"/>
<dbReference type="OMA" id="TIAMDAC"/>
<dbReference type="OrthoDB" id="24670at2759"/>
<dbReference type="PhylomeDB" id="P61963"/>
<dbReference type="TreeFam" id="TF106135"/>
<dbReference type="Reactome" id="R-MMU-8951664">
    <property type="pathway name" value="Neddylation"/>
</dbReference>
<dbReference type="UniPathway" id="UPA00143"/>
<dbReference type="BioGRID-ORCS" id="71833">
    <property type="hits" value="15 hits in 82 CRISPR screens"/>
</dbReference>
<dbReference type="ChiTaRS" id="Dcaf7">
    <property type="organism name" value="mouse"/>
</dbReference>
<dbReference type="PRO" id="PR:P61963"/>
<dbReference type="Proteomes" id="UP000000589">
    <property type="component" value="Chromosome 11"/>
</dbReference>
<dbReference type="RNAct" id="P61963">
    <property type="molecule type" value="protein"/>
</dbReference>
<dbReference type="Bgee" id="ENSMUSG00000049354">
    <property type="expression patterns" value="Expressed in superior cervical ganglion and 222 other cell types or tissues"/>
</dbReference>
<dbReference type="GO" id="GO:0080008">
    <property type="term" value="C:Cul4-RING E3 ubiquitin ligase complex"/>
    <property type="evidence" value="ECO:0000250"/>
    <property type="project" value="UniProtKB"/>
</dbReference>
<dbReference type="GO" id="GO:0005829">
    <property type="term" value="C:cytosol"/>
    <property type="evidence" value="ECO:0007669"/>
    <property type="project" value="Ensembl"/>
</dbReference>
<dbReference type="GO" id="GO:0016604">
    <property type="term" value="C:nuclear body"/>
    <property type="evidence" value="ECO:0007669"/>
    <property type="project" value="Ensembl"/>
</dbReference>
<dbReference type="GO" id="GO:0016363">
    <property type="term" value="C:nuclear matrix"/>
    <property type="evidence" value="ECO:0000250"/>
    <property type="project" value="UniProtKB"/>
</dbReference>
<dbReference type="GO" id="GO:0032991">
    <property type="term" value="C:protein-containing complex"/>
    <property type="evidence" value="ECO:0000250"/>
    <property type="project" value="UniProtKB"/>
</dbReference>
<dbReference type="GO" id="GO:0016567">
    <property type="term" value="P:protein ubiquitination"/>
    <property type="evidence" value="ECO:0007669"/>
    <property type="project" value="UniProtKB-UniPathway"/>
</dbReference>
<dbReference type="FunFam" id="2.130.10.10:FF:000049">
    <property type="entry name" value="DDB1-and CUL4-associated factor 7"/>
    <property type="match status" value="1"/>
</dbReference>
<dbReference type="Gene3D" id="2.130.10.10">
    <property type="entry name" value="YVTN repeat-like/Quinoprotein amine dehydrogenase"/>
    <property type="match status" value="1"/>
</dbReference>
<dbReference type="InterPro" id="IPR045159">
    <property type="entry name" value="DCAF7-like"/>
</dbReference>
<dbReference type="InterPro" id="IPR015943">
    <property type="entry name" value="WD40/YVTN_repeat-like_dom_sf"/>
</dbReference>
<dbReference type="InterPro" id="IPR019775">
    <property type="entry name" value="WD40_repeat_CS"/>
</dbReference>
<dbReference type="InterPro" id="IPR036322">
    <property type="entry name" value="WD40_repeat_dom_sf"/>
</dbReference>
<dbReference type="InterPro" id="IPR001680">
    <property type="entry name" value="WD40_rpt"/>
</dbReference>
<dbReference type="PANTHER" id="PTHR19919">
    <property type="entry name" value="WD REPEAT CONTAINING PROTEIN"/>
    <property type="match status" value="1"/>
</dbReference>
<dbReference type="Pfam" id="PF00400">
    <property type="entry name" value="WD40"/>
    <property type="match status" value="2"/>
</dbReference>
<dbReference type="SMART" id="SM00320">
    <property type="entry name" value="WD40"/>
    <property type="match status" value="5"/>
</dbReference>
<dbReference type="SUPFAM" id="SSF50978">
    <property type="entry name" value="WD40 repeat-like"/>
    <property type="match status" value="1"/>
</dbReference>
<dbReference type="PROSITE" id="PS00678">
    <property type="entry name" value="WD_REPEATS_1"/>
    <property type="match status" value="1"/>
</dbReference>
<dbReference type="PROSITE" id="PS50082">
    <property type="entry name" value="WD_REPEATS_2"/>
    <property type="match status" value="1"/>
</dbReference>
<dbReference type="PROSITE" id="PS50294">
    <property type="entry name" value="WD_REPEATS_REGION"/>
    <property type="match status" value="1"/>
</dbReference>
<keyword id="KW-0963">Cytoplasm</keyword>
<keyword id="KW-0217">Developmental protein</keyword>
<keyword id="KW-0539">Nucleus</keyword>
<keyword id="KW-1185">Reference proteome</keyword>
<keyword id="KW-0677">Repeat</keyword>
<keyword id="KW-0833">Ubl conjugation pathway</keyword>
<keyword id="KW-0853">WD repeat</keyword>
<gene>
    <name type="primary">Dcaf7</name>
    <name type="synonym">Han11</name>
    <name type="synonym">Wdr68</name>
</gene>
<feature type="chain" id="PRO_0000051426" description="DDB1- and CUL4-associated factor 7">
    <location>
        <begin position="1"/>
        <end position="342"/>
    </location>
</feature>
<feature type="repeat" description="WD 1">
    <location>
        <begin position="66"/>
        <end position="108"/>
    </location>
</feature>
<feature type="repeat" description="WD 2">
    <location>
        <begin position="118"/>
        <end position="160"/>
    </location>
</feature>
<feature type="repeat" description="WD 3">
    <location>
        <begin position="172"/>
        <end position="214"/>
    </location>
</feature>
<feature type="repeat" description="WD 4">
    <location>
        <begin position="264"/>
        <end position="304"/>
    </location>
</feature>
<reference key="1">
    <citation type="journal article" date="2005" name="Science">
        <title>The transcriptional landscape of the mammalian genome.</title>
        <authorList>
            <person name="Carninci P."/>
            <person name="Kasukawa T."/>
            <person name="Katayama S."/>
            <person name="Gough J."/>
            <person name="Frith M.C."/>
            <person name="Maeda N."/>
            <person name="Oyama R."/>
            <person name="Ravasi T."/>
            <person name="Lenhard B."/>
            <person name="Wells C."/>
            <person name="Kodzius R."/>
            <person name="Shimokawa K."/>
            <person name="Bajic V.B."/>
            <person name="Brenner S.E."/>
            <person name="Batalov S."/>
            <person name="Forrest A.R."/>
            <person name="Zavolan M."/>
            <person name="Davis M.J."/>
            <person name="Wilming L.G."/>
            <person name="Aidinis V."/>
            <person name="Allen J.E."/>
            <person name="Ambesi-Impiombato A."/>
            <person name="Apweiler R."/>
            <person name="Aturaliya R.N."/>
            <person name="Bailey T.L."/>
            <person name="Bansal M."/>
            <person name="Baxter L."/>
            <person name="Beisel K.W."/>
            <person name="Bersano T."/>
            <person name="Bono H."/>
            <person name="Chalk A.M."/>
            <person name="Chiu K.P."/>
            <person name="Choudhary V."/>
            <person name="Christoffels A."/>
            <person name="Clutterbuck D.R."/>
            <person name="Crowe M.L."/>
            <person name="Dalla E."/>
            <person name="Dalrymple B.P."/>
            <person name="de Bono B."/>
            <person name="Della Gatta G."/>
            <person name="di Bernardo D."/>
            <person name="Down T."/>
            <person name="Engstrom P."/>
            <person name="Fagiolini M."/>
            <person name="Faulkner G."/>
            <person name="Fletcher C.F."/>
            <person name="Fukushima T."/>
            <person name="Furuno M."/>
            <person name="Futaki S."/>
            <person name="Gariboldi M."/>
            <person name="Georgii-Hemming P."/>
            <person name="Gingeras T.R."/>
            <person name="Gojobori T."/>
            <person name="Green R.E."/>
            <person name="Gustincich S."/>
            <person name="Harbers M."/>
            <person name="Hayashi Y."/>
            <person name="Hensch T.K."/>
            <person name="Hirokawa N."/>
            <person name="Hill D."/>
            <person name="Huminiecki L."/>
            <person name="Iacono M."/>
            <person name="Ikeo K."/>
            <person name="Iwama A."/>
            <person name="Ishikawa T."/>
            <person name="Jakt M."/>
            <person name="Kanapin A."/>
            <person name="Katoh M."/>
            <person name="Kawasawa Y."/>
            <person name="Kelso J."/>
            <person name="Kitamura H."/>
            <person name="Kitano H."/>
            <person name="Kollias G."/>
            <person name="Krishnan S.P."/>
            <person name="Kruger A."/>
            <person name="Kummerfeld S.K."/>
            <person name="Kurochkin I.V."/>
            <person name="Lareau L.F."/>
            <person name="Lazarevic D."/>
            <person name="Lipovich L."/>
            <person name="Liu J."/>
            <person name="Liuni S."/>
            <person name="McWilliam S."/>
            <person name="Madan Babu M."/>
            <person name="Madera M."/>
            <person name="Marchionni L."/>
            <person name="Matsuda H."/>
            <person name="Matsuzawa S."/>
            <person name="Miki H."/>
            <person name="Mignone F."/>
            <person name="Miyake S."/>
            <person name="Morris K."/>
            <person name="Mottagui-Tabar S."/>
            <person name="Mulder N."/>
            <person name="Nakano N."/>
            <person name="Nakauchi H."/>
            <person name="Ng P."/>
            <person name="Nilsson R."/>
            <person name="Nishiguchi S."/>
            <person name="Nishikawa S."/>
            <person name="Nori F."/>
            <person name="Ohara O."/>
            <person name="Okazaki Y."/>
            <person name="Orlando V."/>
            <person name="Pang K.C."/>
            <person name="Pavan W.J."/>
            <person name="Pavesi G."/>
            <person name="Pesole G."/>
            <person name="Petrovsky N."/>
            <person name="Piazza S."/>
            <person name="Reed J."/>
            <person name="Reid J.F."/>
            <person name="Ring B.Z."/>
            <person name="Ringwald M."/>
            <person name="Rost B."/>
            <person name="Ruan Y."/>
            <person name="Salzberg S.L."/>
            <person name="Sandelin A."/>
            <person name="Schneider C."/>
            <person name="Schoenbach C."/>
            <person name="Sekiguchi K."/>
            <person name="Semple C.A."/>
            <person name="Seno S."/>
            <person name="Sessa L."/>
            <person name="Sheng Y."/>
            <person name="Shibata Y."/>
            <person name="Shimada H."/>
            <person name="Shimada K."/>
            <person name="Silva D."/>
            <person name="Sinclair B."/>
            <person name="Sperling S."/>
            <person name="Stupka E."/>
            <person name="Sugiura K."/>
            <person name="Sultana R."/>
            <person name="Takenaka Y."/>
            <person name="Taki K."/>
            <person name="Tammoja K."/>
            <person name="Tan S.L."/>
            <person name="Tang S."/>
            <person name="Taylor M.S."/>
            <person name="Tegner J."/>
            <person name="Teichmann S.A."/>
            <person name="Ueda H.R."/>
            <person name="van Nimwegen E."/>
            <person name="Verardo R."/>
            <person name="Wei C.L."/>
            <person name="Yagi K."/>
            <person name="Yamanishi H."/>
            <person name="Zabarovsky E."/>
            <person name="Zhu S."/>
            <person name="Zimmer A."/>
            <person name="Hide W."/>
            <person name="Bult C."/>
            <person name="Grimmond S.M."/>
            <person name="Teasdale R.D."/>
            <person name="Liu E.T."/>
            <person name="Brusic V."/>
            <person name="Quackenbush J."/>
            <person name="Wahlestedt C."/>
            <person name="Mattick J.S."/>
            <person name="Hume D.A."/>
            <person name="Kai C."/>
            <person name="Sasaki D."/>
            <person name="Tomaru Y."/>
            <person name="Fukuda S."/>
            <person name="Kanamori-Katayama M."/>
            <person name="Suzuki M."/>
            <person name="Aoki J."/>
            <person name="Arakawa T."/>
            <person name="Iida J."/>
            <person name="Imamura K."/>
            <person name="Itoh M."/>
            <person name="Kato T."/>
            <person name="Kawaji H."/>
            <person name="Kawagashira N."/>
            <person name="Kawashima T."/>
            <person name="Kojima M."/>
            <person name="Kondo S."/>
            <person name="Konno H."/>
            <person name="Nakano K."/>
            <person name="Ninomiya N."/>
            <person name="Nishio T."/>
            <person name="Okada M."/>
            <person name="Plessy C."/>
            <person name="Shibata K."/>
            <person name="Shiraki T."/>
            <person name="Suzuki S."/>
            <person name="Tagami M."/>
            <person name="Waki K."/>
            <person name="Watahiki A."/>
            <person name="Okamura-Oho Y."/>
            <person name="Suzuki H."/>
            <person name="Kawai J."/>
            <person name="Hayashizaki Y."/>
        </authorList>
    </citation>
    <scope>NUCLEOTIDE SEQUENCE [LARGE SCALE MRNA]</scope>
    <source>
        <strain>C57BL/6J</strain>
        <tissue>Cerebellum</tissue>
        <tissue>Testis</tissue>
    </source>
</reference>
<reference key="2">
    <citation type="journal article" date="2004" name="Genome Res.">
        <title>The status, quality, and expansion of the NIH full-length cDNA project: the Mammalian Gene Collection (MGC).</title>
        <authorList>
            <consortium name="The MGC Project Team"/>
        </authorList>
    </citation>
    <scope>NUCLEOTIDE SEQUENCE [LARGE SCALE MRNA]</scope>
    <source>
        <tissue>Limb</tissue>
    </source>
</reference>
<reference key="3">
    <citation type="journal article" date="2006" name="J. Dermatol. Sci.">
        <title>HAN11 binds mDia1 and controls GLI1 transcriptional activity.</title>
        <authorList>
            <person name="Morita K."/>
            <person name="Lo Celso C."/>
            <person name="Spencer-Dene B."/>
            <person name="Zouboulis C.C."/>
            <person name="Watt F.M."/>
        </authorList>
    </citation>
    <scope>DEVELOPMENTAL STAGE</scope>
</reference>
<reference key="4">
    <citation type="journal article" date="2010" name="Cell">
        <title>A tissue-specific atlas of mouse protein phosphorylation and expression.</title>
        <authorList>
            <person name="Huttlin E.L."/>
            <person name="Jedrychowski M.P."/>
            <person name="Elias J.E."/>
            <person name="Goswami T."/>
            <person name="Rad R."/>
            <person name="Beausoleil S.A."/>
            <person name="Villen J."/>
            <person name="Haas W."/>
            <person name="Sowa M.E."/>
            <person name="Gygi S.P."/>
        </authorList>
    </citation>
    <scope>IDENTIFICATION BY MASS SPECTROMETRY [LARGE SCALE ANALYSIS]</scope>
    <source>
        <tissue>Brain</tissue>
        <tissue>Lung</tissue>
    </source>
</reference>
<protein>
    <recommendedName>
        <fullName>DDB1- and CUL4-associated factor 7</fullName>
    </recommendedName>
    <alternativeName>
        <fullName>WD repeat-containing protein 68</fullName>
    </alternativeName>
    <alternativeName>
        <fullName>WD repeat-containing protein An11 homolog</fullName>
    </alternativeName>
</protein>